<evidence type="ECO:0000250" key="1">
    <source>
        <dbReference type="UniProtKB" id="Q40313"/>
    </source>
</evidence>
<evidence type="ECO:0000255" key="2">
    <source>
        <dbReference type="PROSITE-ProRule" id="PRU01019"/>
    </source>
</evidence>
<evidence type="ECO:0000269" key="3">
    <source>
    </source>
</evidence>
<evidence type="ECO:0000303" key="4">
    <source>
    </source>
</evidence>
<evidence type="ECO:0000305" key="5"/>
<sequence>MAENGAAVQENQNVIRHQEVGHKSLLQSDALYQYILETSVYPREPESMKELRELTAKHPWNLMTTSADEGQFLNMLLKLINAKNTMEIGVYTGYSLLATALAIPHDGKILAMDINRENYEIGLPVIEKAGVAHKIDFREGPALPVLDQLVEDKNNHGTYDFIFVDADKDNYINYHKRIIDLVKVGGLIGYDNTLWNGSLVAPADTPMRKYVRYYRDFILELNKALAADPRIEICMLPVGDGITLGRRIS</sequence>
<dbReference type="EC" id="2.1.1.104" evidence="2 3"/>
<dbReference type="EC" id="2.1.1.-" evidence="3"/>
<dbReference type="EMBL" id="KT223506">
    <property type="protein sequence ID" value="ALP75646.1"/>
    <property type="molecule type" value="mRNA"/>
</dbReference>
<dbReference type="SMR" id="A0A0S2UWC9"/>
<dbReference type="UniPathway" id="UPA00711"/>
<dbReference type="GO" id="GO:0005829">
    <property type="term" value="C:cytosol"/>
    <property type="evidence" value="ECO:0000314"/>
    <property type="project" value="UniProtKB"/>
</dbReference>
<dbReference type="GO" id="GO:0042409">
    <property type="term" value="F:caffeoyl-CoA O-methyltransferase activity"/>
    <property type="evidence" value="ECO:0000314"/>
    <property type="project" value="UniProtKB"/>
</dbReference>
<dbReference type="GO" id="GO:0046872">
    <property type="term" value="F:metal ion binding"/>
    <property type="evidence" value="ECO:0007669"/>
    <property type="project" value="UniProtKB-KW"/>
</dbReference>
<dbReference type="GO" id="GO:0007623">
    <property type="term" value="P:circadian rhythm"/>
    <property type="evidence" value="ECO:0000270"/>
    <property type="project" value="UniProtKB"/>
</dbReference>
<dbReference type="GO" id="GO:0010597">
    <property type="term" value="P:green leaf volatile biosynthetic process"/>
    <property type="evidence" value="ECO:0000315"/>
    <property type="project" value="UniProtKB"/>
</dbReference>
<dbReference type="GO" id="GO:0009809">
    <property type="term" value="P:lignin biosynthetic process"/>
    <property type="evidence" value="ECO:0007669"/>
    <property type="project" value="UniProtKB-KW"/>
</dbReference>
<dbReference type="GO" id="GO:0032259">
    <property type="term" value="P:methylation"/>
    <property type="evidence" value="ECO:0007669"/>
    <property type="project" value="UniProtKB-KW"/>
</dbReference>
<dbReference type="GO" id="GO:0009698">
    <property type="term" value="P:phenylpropanoid metabolic process"/>
    <property type="evidence" value="ECO:0000314"/>
    <property type="project" value="UniProtKB"/>
</dbReference>
<dbReference type="CDD" id="cd02440">
    <property type="entry name" value="AdoMet_MTases"/>
    <property type="match status" value="1"/>
</dbReference>
<dbReference type="FunFam" id="3.40.50.150:FF:000147">
    <property type="entry name" value="Caffeoyl-CoA O-methyltransferase 1"/>
    <property type="match status" value="1"/>
</dbReference>
<dbReference type="Gene3D" id="3.40.50.150">
    <property type="entry name" value="Vaccinia Virus protein VP39"/>
    <property type="match status" value="1"/>
</dbReference>
<dbReference type="InterPro" id="IPR050362">
    <property type="entry name" value="Cation-dep_OMT"/>
</dbReference>
<dbReference type="InterPro" id="IPR029063">
    <property type="entry name" value="SAM-dependent_MTases_sf"/>
</dbReference>
<dbReference type="InterPro" id="IPR002935">
    <property type="entry name" value="SAM_O-MeTrfase"/>
</dbReference>
<dbReference type="PANTHER" id="PTHR10509:SF97">
    <property type="entry name" value="CAFFEOYL-COA O-METHYLTRANSFERASE 5"/>
    <property type="match status" value="1"/>
</dbReference>
<dbReference type="PANTHER" id="PTHR10509">
    <property type="entry name" value="O-METHYLTRANSFERASE-RELATED"/>
    <property type="match status" value="1"/>
</dbReference>
<dbReference type="Pfam" id="PF01596">
    <property type="entry name" value="Methyltransf_3"/>
    <property type="match status" value="1"/>
</dbReference>
<dbReference type="SUPFAM" id="SSF53335">
    <property type="entry name" value="S-adenosyl-L-methionine-dependent methyltransferases"/>
    <property type="match status" value="1"/>
</dbReference>
<dbReference type="PROSITE" id="PS51682">
    <property type="entry name" value="SAM_OMT_I"/>
    <property type="match status" value="1"/>
</dbReference>
<comment type="function">
    <text evidence="3">Involved in the production of floral volatile phenylpropanoids in flowers of fragrant cultivars (e.g. cv. Mitchell and cv. V26) from cinnamic acid, a common precursor with the anthocyanin biosynthesis pathway involved in flower pigmentation (PubMed:26620524). Methylates caffeoyl-CoA to feruloyl-CoA, also able to methylate 5-hydroxyferuloyl-CoA (PubMed:26620524).</text>
</comment>
<comment type="catalytic activity">
    <reaction evidence="2 3">
        <text>(E)-caffeoyl-CoA + S-adenosyl-L-methionine = (E)-feruloyl-CoA + S-adenosyl-L-homocysteine + H(+)</text>
        <dbReference type="Rhea" id="RHEA:16925"/>
        <dbReference type="ChEBI" id="CHEBI:15378"/>
        <dbReference type="ChEBI" id="CHEBI:57856"/>
        <dbReference type="ChEBI" id="CHEBI:59789"/>
        <dbReference type="ChEBI" id="CHEBI:87136"/>
        <dbReference type="ChEBI" id="CHEBI:87305"/>
        <dbReference type="EC" id="2.1.1.104"/>
    </reaction>
    <physiologicalReaction direction="left-to-right" evidence="3">
        <dbReference type="Rhea" id="RHEA:16926"/>
    </physiologicalReaction>
</comment>
<comment type="catalytic activity">
    <reaction evidence="3">
        <text>(E)-5-hydroxyferuloyl-CoA + S-adenosyl-L-methionine = (E)-sinapoyl-CoA + S-adenosyl-L-homocysteine + H(+)</text>
        <dbReference type="Rhea" id="RHEA:64860"/>
        <dbReference type="ChEBI" id="CHEBI:15378"/>
        <dbReference type="ChEBI" id="CHEBI:57393"/>
        <dbReference type="ChEBI" id="CHEBI:57856"/>
        <dbReference type="ChEBI" id="CHEBI:59789"/>
        <dbReference type="ChEBI" id="CHEBI:156249"/>
    </reaction>
    <physiologicalReaction direction="left-to-right" evidence="3">
        <dbReference type="Rhea" id="RHEA:64861"/>
    </physiologicalReaction>
</comment>
<comment type="cofactor">
    <cofactor evidence="1">
        <name>a divalent metal cation</name>
        <dbReference type="ChEBI" id="CHEBI:60240"/>
    </cofactor>
    <text evidence="1">Binds 1 divalent metal cation per subunit.</text>
</comment>
<comment type="biophysicochemical properties">
    <kinetics>
        <Vmax evidence="3">5.8 pmol/sec/mg enzyme with (E)-caffeoyl-CoA as substrate</Vmax>
    </kinetics>
</comment>
<comment type="pathway">
    <text evidence="3">Aromatic compound metabolism; phenylpropanoid biosynthesis.</text>
</comment>
<comment type="subcellular location">
    <subcellularLocation>
        <location evidence="3">Cytoplasm</location>
        <location evidence="3">Cytosol</location>
    </subcellularLocation>
</comment>
<comment type="tissue specificity">
    <text evidence="3">Mostly expressed in petal limbs and tubes, and, at low levels, in flower buds, stamens, pistils, stems, roots and leaves.</text>
</comment>
<comment type="developmental stage">
    <text evidence="3">Accumulates during flower development with highest levels in open flowers, at anthesis, and fades out as flowers are senescing.</text>
</comment>
<comment type="induction">
    <text evidence="3">Promoted by ODO1 (PubMed:26620524). Circadian-regulation with peak levels occurring in the afternoon in flowers (PubMed:26620524).</text>
</comment>
<comment type="disruption phenotype">
    <text evidence="3">Reduction of eugenol production but not of isoeugenol associated with abnormally purple-colored leaves and stems (e.g. especially in vascular bundles), and pink flowers due to the accumulation of anthocyanins (e.g. petunidin, delphinidin, malvidin and peonidin); purple floral buds and pink blush upon petals opening that fade in older flowers (PubMed:26620524). Disturbed CoA esters homeostasis and reduced lignin levels, but accumulation of anthocyanins associated with perturbated biosynthetic gene expression (PubMed:26620524).</text>
</comment>
<comment type="similarity">
    <text evidence="2">Belongs to the class I-like SAM-binding methyltransferase superfamily. Cation-dependent O-methyltransferase family. CCoAMT subfamily.</text>
</comment>
<reference key="1">
    <citation type="journal article" date="2016" name="Plant Physiol.">
        <title>CCoAOMT down-regulation activates anthocyanin biosynthesis in petunia.</title>
        <authorList>
            <person name="Shaipulah N.F.M."/>
            <person name="Muhlemann J.K."/>
            <person name="Woodworth B.D."/>
            <person name="Van Moerkercke A."/>
            <person name="Verdonk J.C."/>
            <person name="Ramirez A.A."/>
            <person name="Haring M.A."/>
            <person name="Dudareva N."/>
            <person name="Schuurink R.C."/>
        </authorList>
    </citation>
    <scope>NUCLEOTIDE SEQUENCE [MRNA]</scope>
    <scope>FUNCTION</scope>
    <scope>DISRUPTION PHENOTYPE</scope>
    <scope>CATALYTIC ACTIVITY</scope>
    <scope>PATHWAY</scope>
    <scope>INDUCTION BY ODO1</scope>
    <scope>SUBCELLULAR LOCATION</scope>
    <scope>TISSUE SPECIFICITY</scope>
    <scope>DEVELOPMENTAL STAGE</scope>
    <scope>BIOPHYSICOCHEMICAL PROPERTIES</scope>
    <source>
        <strain>cv. Mitchell</strain>
        <tissue>Corolla</tissue>
    </source>
</reference>
<gene>
    <name evidence="4" type="primary">CCOAOMT1</name>
</gene>
<accession>A0A0S2UWC9</accession>
<proteinExistence type="evidence at protein level"/>
<keyword id="KW-0963">Cytoplasm</keyword>
<keyword id="KW-0438">Lignin biosynthesis</keyword>
<keyword id="KW-0479">Metal-binding</keyword>
<keyword id="KW-0489">Methyltransferase</keyword>
<keyword id="KW-0949">S-adenosyl-L-methionine</keyword>
<keyword id="KW-0808">Transferase</keyword>
<protein>
    <recommendedName>
        <fullName evidence="4">Caffeoyl-CoA O-methyltransferase 1</fullName>
        <shortName evidence="4">PhCCoAOMT1</shortName>
        <ecNumber evidence="2 3">2.1.1.104</ecNumber>
    </recommendedName>
    <alternativeName>
        <fullName evidence="5">5-hydroxyferuloyl-CoA O-methyltransferase 1</fullName>
        <ecNumber evidence="3">2.1.1.-</ecNumber>
    </alternativeName>
</protein>
<name>CAMT1_PETHY</name>
<organism>
    <name type="scientific">Petunia hybrida</name>
    <name type="common">Petunia</name>
    <dbReference type="NCBI Taxonomy" id="4102"/>
    <lineage>
        <taxon>Eukaryota</taxon>
        <taxon>Viridiplantae</taxon>
        <taxon>Streptophyta</taxon>
        <taxon>Embryophyta</taxon>
        <taxon>Tracheophyta</taxon>
        <taxon>Spermatophyta</taxon>
        <taxon>Magnoliopsida</taxon>
        <taxon>eudicotyledons</taxon>
        <taxon>Gunneridae</taxon>
        <taxon>Pentapetalae</taxon>
        <taxon>asterids</taxon>
        <taxon>lamiids</taxon>
        <taxon>Solanales</taxon>
        <taxon>Solanaceae</taxon>
        <taxon>Petunioideae</taxon>
        <taxon>Petunia</taxon>
    </lineage>
</organism>
<feature type="chain" id="PRO_0000451494" description="Caffeoyl-CoA O-methyltransferase 1">
    <location>
        <begin position="1"/>
        <end position="249"/>
    </location>
</feature>
<feature type="binding site" evidence="1">
    <location>
        <position position="23"/>
    </location>
    <ligand>
        <name>substrate</name>
    </ligand>
</feature>
<feature type="binding site" evidence="2">
    <location>
        <position position="65"/>
    </location>
    <ligand>
        <name>S-adenosyl-L-methionine</name>
        <dbReference type="ChEBI" id="CHEBI:59789"/>
    </ligand>
</feature>
<feature type="binding site" evidence="2">
    <location>
        <position position="87"/>
    </location>
    <ligand>
        <name>S-adenosyl-L-methionine</name>
        <dbReference type="ChEBI" id="CHEBI:59789"/>
    </ligand>
</feature>
<feature type="binding site" evidence="2">
    <location>
        <begin position="89"/>
        <end position="90"/>
    </location>
    <ligand>
        <name>S-adenosyl-L-methionine</name>
        <dbReference type="ChEBI" id="CHEBI:59789"/>
    </ligand>
</feature>
<feature type="binding site" evidence="2">
    <location>
        <position position="95"/>
    </location>
    <ligand>
        <name>S-adenosyl-L-methionine</name>
        <dbReference type="ChEBI" id="CHEBI:59789"/>
    </ligand>
</feature>
<feature type="binding site" evidence="2">
    <location>
        <position position="113"/>
    </location>
    <ligand>
        <name>S-adenosyl-L-methionine</name>
        <dbReference type="ChEBI" id="CHEBI:59789"/>
    </ligand>
</feature>
<feature type="binding site" evidence="2">
    <location>
        <position position="142"/>
    </location>
    <ligand>
        <name>S-adenosyl-L-methionine</name>
        <dbReference type="ChEBI" id="CHEBI:59789"/>
    </ligand>
</feature>
<feature type="binding site" evidence="2">
    <location>
        <position position="165"/>
    </location>
    <ligand>
        <name>a divalent metal cation</name>
        <dbReference type="ChEBI" id="CHEBI:60240"/>
    </ligand>
</feature>
<feature type="binding site" evidence="1">
    <location>
        <position position="165"/>
    </location>
    <ligand>
        <name>substrate</name>
    </ligand>
</feature>
<feature type="binding site" evidence="2">
    <location>
        <position position="167"/>
    </location>
    <ligand>
        <name>S-adenosyl-L-methionine</name>
        <dbReference type="ChEBI" id="CHEBI:59789"/>
    </ligand>
</feature>
<feature type="binding site" evidence="2">
    <location>
        <position position="191"/>
    </location>
    <ligand>
        <name>a divalent metal cation</name>
        <dbReference type="ChEBI" id="CHEBI:60240"/>
    </ligand>
</feature>
<feature type="binding site" evidence="2">
    <location>
        <position position="192"/>
    </location>
    <ligand>
        <name>a divalent metal cation</name>
        <dbReference type="ChEBI" id="CHEBI:60240"/>
    </ligand>
</feature>
<feature type="binding site" evidence="1">
    <location>
        <position position="196"/>
    </location>
    <ligand>
        <name>substrate</name>
    </ligand>
</feature>